<sequence length="186" mass="20899">MSVADIKKSVEQKMQRSIEAFKNDLAKIRTGRAHTGLLDHVQVDYYGSMVPISQVANLTLVDARTIGVQPWEKTMVAKVEKAIREADLGLNPATSGDLIRVPMPPLTEERRRELTKVVKSEGETAKVAVRNLRRDANEQLKKLVKDKEISEDDERRASDDVQKLTDKHVAEIDKLVQAKDAEIMTV</sequence>
<reference key="1">
    <citation type="journal article" date="2010" name="Genome Biol. Evol.">
        <title>Continuing evolution of Burkholderia mallei through genome reduction and large-scale rearrangements.</title>
        <authorList>
            <person name="Losada L."/>
            <person name="Ronning C.M."/>
            <person name="DeShazer D."/>
            <person name="Woods D."/>
            <person name="Fedorova N."/>
            <person name="Kim H.S."/>
            <person name="Shabalina S.A."/>
            <person name="Pearson T.R."/>
            <person name="Brinkac L."/>
            <person name="Tan P."/>
            <person name="Nandi T."/>
            <person name="Crabtree J."/>
            <person name="Badger J."/>
            <person name="Beckstrom-Sternberg S."/>
            <person name="Saqib M."/>
            <person name="Schutzer S.E."/>
            <person name="Keim P."/>
            <person name="Nierman W.C."/>
        </authorList>
    </citation>
    <scope>NUCLEOTIDE SEQUENCE [LARGE SCALE GENOMIC DNA]</scope>
    <source>
        <strain>NCTC 10247</strain>
    </source>
</reference>
<gene>
    <name evidence="1" type="primary">frr</name>
    <name type="ordered locus">BMA10247_1325</name>
</gene>
<comment type="function">
    <text evidence="1">Responsible for the release of ribosomes from messenger RNA at the termination of protein biosynthesis. May increase the efficiency of translation by recycling ribosomes from one round of translation to another.</text>
</comment>
<comment type="subcellular location">
    <subcellularLocation>
        <location evidence="1">Cytoplasm</location>
    </subcellularLocation>
</comment>
<comment type="similarity">
    <text evidence="1">Belongs to the RRF family.</text>
</comment>
<proteinExistence type="inferred from homology"/>
<protein>
    <recommendedName>
        <fullName evidence="1">Ribosome-recycling factor</fullName>
        <shortName evidence="1">RRF</shortName>
    </recommendedName>
    <alternativeName>
        <fullName evidence="1">Ribosome-releasing factor</fullName>
    </alternativeName>
</protein>
<feature type="chain" id="PRO_1000003118" description="Ribosome-recycling factor">
    <location>
        <begin position="1"/>
        <end position="186"/>
    </location>
</feature>
<evidence type="ECO:0000255" key="1">
    <source>
        <dbReference type="HAMAP-Rule" id="MF_00040"/>
    </source>
</evidence>
<accession>A3MKU0</accession>
<keyword id="KW-0963">Cytoplasm</keyword>
<keyword id="KW-0648">Protein biosynthesis</keyword>
<dbReference type="EMBL" id="CP000548">
    <property type="protein sequence ID" value="ABO05027.1"/>
    <property type="molecule type" value="Genomic_DNA"/>
</dbReference>
<dbReference type="RefSeq" id="WP_004192143.1">
    <property type="nucleotide sequence ID" value="NZ_CP007802.1"/>
</dbReference>
<dbReference type="SMR" id="A3MKU0"/>
<dbReference type="GeneID" id="93060697"/>
<dbReference type="KEGG" id="bmaz:BM44_1801"/>
<dbReference type="KEGG" id="bmn:BMA10247_1325"/>
<dbReference type="PATRIC" id="fig|320389.8.peg.2015"/>
<dbReference type="GO" id="GO:0005829">
    <property type="term" value="C:cytosol"/>
    <property type="evidence" value="ECO:0007669"/>
    <property type="project" value="GOC"/>
</dbReference>
<dbReference type="GO" id="GO:0043023">
    <property type="term" value="F:ribosomal large subunit binding"/>
    <property type="evidence" value="ECO:0007669"/>
    <property type="project" value="TreeGrafter"/>
</dbReference>
<dbReference type="GO" id="GO:0002184">
    <property type="term" value="P:cytoplasmic translational termination"/>
    <property type="evidence" value="ECO:0007669"/>
    <property type="project" value="TreeGrafter"/>
</dbReference>
<dbReference type="CDD" id="cd00520">
    <property type="entry name" value="RRF"/>
    <property type="match status" value="1"/>
</dbReference>
<dbReference type="FunFam" id="1.10.132.20:FF:000001">
    <property type="entry name" value="Ribosome-recycling factor"/>
    <property type="match status" value="1"/>
</dbReference>
<dbReference type="FunFam" id="3.30.1360.40:FF:000001">
    <property type="entry name" value="Ribosome-recycling factor"/>
    <property type="match status" value="1"/>
</dbReference>
<dbReference type="Gene3D" id="3.30.1360.40">
    <property type="match status" value="1"/>
</dbReference>
<dbReference type="Gene3D" id="1.10.132.20">
    <property type="entry name" value="Ribosome-recycling factor"/>
    <property type="match status" value="1"/>
</dbReference>
<dbReference type="HAMAP" id="MF_00040">
    <property type="entry name" value="RRF"/>
    <property type="match status" value="1"/>
</dbReference>
<dbReference type="InterPro" id="IPR002661">
    <property type="entry name" value="Ribosome_recyc_fac"/>
</dbReference>
<dbReference type="InterPro" id="IPR023584">
    <property type="entry name" value="Ribosome_recyc_fac_dom"/>
</dbReference>
<dbReference type="InterPro" id="IPR036191">
    <property type="entry name" value="RRF_sf"/>
</dbReference>
<dbReference type="NCBIfam" id="TIGR00496">
    <property type="entry name" value="frr"/>
    <property type="match status" value="1"/>
</dbReference>
<dbReference type="PANTHER" id="PTHR20982:SF3">
    <property type="entry name" value="MITOCHONDRIAL RIBOSOME RECYCLING FACTOR PSEUDO 1"/>
    <property type="match status" value="1"/>
</dbReference>
<dbReference type="PANTHER" id="PTHR20982">
    <property type="entry name" value="RIBOSOME RECYCLING FACTOR"/>
    <property type="match status" value="1"/>
</dbReference>
<dbReference type="Pfam" id="PF01765">
    <property type="entry name" value="RRF"/>
    <property type="match status" value="1"/>
</dbReference>
<dbReference type="SUPFAM" id="SSF55194">
    <property type="entry name" value="Ribosome recycling factor, RRF"/>
    <property type="match status" value="1"/>
</dbReference>
<name>RRF_BURM7</name>
<organism>
    <name type="scientific">Burkholderia mallei (strain NCTC 10247)</name>
    <dbReference type="NCBI Taxonomy" id="320389"/>
    <lineage>
        <taxon>Bacteria</taxon>
        <taxon>Pseudomonadati</taxon>
        <taxon>Pseudomonadota</taxon>
        <taxon>Betaproteobacteria</taxon>
        <taxon>Burkholderiales</taxon>
        <taxon>Burkholderiaceae</taxon>
        <taxon>Burkholderia</taxon>
        <taxon>pseudomallei group</taxon>
    </lineage>
</organism>